<feature type="signal peptide" evidence="2">
    <location>
        <begin position="1"/>
        <end position="15"/>
    </location>
</feature>
<feature type="chain" id="PRO_0000394703" description="Probable alpha-fucosidase A">
    <location>
        <begin position="16"/>
        <end position="723"/>
    </location>
</feature>
<feature type="glycosylation site" description="N-linked (GlcNAc...) asparagine" evidence="2">
    <location>
        <position position="77"/>
    </location>
</feature>
<feature type="glycosylation site" description="N-linked (GlcNAc...) asparagine" evidence="2">
    <location>
        <position position="98"/>
    </location>
</feature>
<feature type="glycosylation site" description="N-linked (GlcNAc...) asparagine" evidence="2">
    <location>
        <position position="117"/>
    </location>
</feature>
<feature type="glycosylation site" description="N-linked (GlcNAc...) asparagine" evidence="2">
    <location>
        <position position="171"/>
    </location>
</feature>
<feature type="glycosylation site" description="N-linked (GlcNAc...) asparagine" evidence="2">
    <location>
        <position position="194"/>
    </location>
</feature>
<feature type="glycosylation site" description="N-linked (GlcNAc...) asparagine" evidence="2">
    <location>
        <position position="243"/>
    </location>
</feature>
<feature type="glycosylation site" description="N-linked (GlcNAc...) asparagine" evidence="2">
    <location>
        <position position="334"/>
    </location>
</feature>
<feature type="glycosylation site" description="N-linked (GlcNAc...) asparagine" evidence="2">
    <location>
        <position position="558"/>
    </location>
</feature>
<feature type="glycosylation site" description="N-linked (GlcNAc...) asparagine" evidence="2">
    <location>
        <position position="566"/>
    </location>
</feature>
<feature type="glycosylation site" description="N-linked (GlcNAc...) asparagine" evidence="2">
    <location>
        <position position="595"/>
    </location>
</feature>
<comment type="function">
    <text evidence="1">Alpha-fucosidase involved in degradation of fucosylated xyloglucans. Hydrolyzes alpha-1,2-linked fucose (By similarity).</text>
</comment>
<comment type="catalytic activity">
    <reaction>
        <text>an alpha-L-fucoside + H2O = L-fucose + an alcohol</text>
        <dbReference type="Rhea" id="RHEA:12288"/>
        <dbReference type="ChEBI" id="CHEBI:2181"/>
        <dbReference type="ChEBI" id="CHEBI:15377"/>
        <dbReference type="ChEBI" id="CHEBI:28349"/>
        <dbReference type="ChEBI" id="CHEBI:30879"/>
        <dbReference type="EC" id="3.2.1.51"/>
    </reaction>
</comment>
<comment type="subcellular location">
    <subcellularLocation>
        <location evidence="1">Secreted</location>
    </subcellularLocation>
</comment>
<comment type="similarity">
    <text evidence="3">Belongs to the glycosyl hydrolase 95 family.</text>
</comment>
<comment type="sequence caution" evidence="3">
    <conflict type="erroneous gene model prediction">
        <sequence resource="EMBL-CDS" id="BAE55452"/>
    </conflict>
</comment>
<accession>Q2USL3</accession>
<protein>
    <recommendedName>
        <fullName>Probable alpha-fucosidase A</fullName>
        <ecNumber>3.2.1.51</ecNumber>
    </recommendedName>
    <alternativeName>
        <fullName>Alpha-L-fucoside fucohydrolase A</fullName>
    </alternativeName>
</protein>
<keyword id="KW-0119">Carbohydrate metabolism</keyword>
<keyword id="KW-0325">Glycoprotein</keyword>
<keyword id="KW-0326">Glycosidase</keyword>
<keyword id="KW-0378">Hydrolase</keyword>
<keyword id="KW-0624">Polysaccharide degradation</keyword>
<keyword id="KW-1185">Reference proteome</keyword>
<keyword id="KW-0964">Secreted</keyword>
<keyword id="KW-0732">Signal</keyword>
<organism>
    <name type="scientific">Aspergillus oryzae (strain ATCC 42149 / RIB 40)</name>
    <name type="common">Yellow koji mold</name>
    <dbReference type="NCBI Taxonomy" id="510516"/>
    <lineage>
        <taxon>Eukaryota</taxon>
        <taxon>Fungi</taxon>
        <taxon>Dikarya</taxon>
        <taxon>Ascomycota</taxon>
        <taxon>Pezizomycotina</taxon>
        <taxon>Eurotiomycetes</taxon>
        <taxon>Eurotiomycetidae</taxon>
        <taxon>Eurotiales</taxon>
        <taxon>Aspergillaceae</taxon>
        <taxon>Aspergillus</taxon>
        <taxon>Aspergillus subgen. Circumdati</taxon>
    </lineage>
</organism>
<dbReference type="EC" id="3.2.1.51"/>
<dbReference type="EMBL" id="BA000049">
    <property type="protein sequence ID" value="BAE55452.1"/>
    <property type="status" value="ALT_SEQ"/>
    <property type="molecule type" value="Genomic_DNA"/>
</dbReference>
<dbReference type="SMR" id="Q2USL3"/>
<dbReference type="STRING" id="510516.Q2USL3"/>
<dbReference type="CAZy" id="GH95">
    <property type="family name" value="Glycoside Hydrolase Family 95"/>
</dbReference>
<dbReference type="GlyCosmos" id="Q2USL3">
    <property type="glycosylation" value="10 sites, No reported glycans"/>
</dbReference>
<dbReference type="Proteomes" id="UP000006564">
    <property type="component" value="Chromosome 1"/>
</dbReference>
<dbReference type="GO" id="GO:0005576">
    <property type="term" value="C:extracellular region"/>
    <property type="evidence" value="ECO:0007669"/>
    <property type="project" value="UniProtKB-SubCell"/>
</dbReference>
<dbReference type="GO" id="GO:0004560">
    <property type="term" value="F:alpha-L-fucosidase activity"/>
    <property type="evidence" value="ECO:0007669"/>
    <property type="project" value="UniProtKB-EC"/>
</dbReference>
<dbReference type="GO" id="GO:0000272">
    <property type="term" value="P:polysaccharide catabolic process"/>
    <property type="evidence" value="ECO:0007669"/>
    <property type="project" value="UniProtKB-KW"/>
</dbReference>
<dbReference type="Gene3D" id="1.50.10.10">
    <property type="match status" value="1"/>
</dbReference>
<dbReference type="Gene3D" id="2.70.98.50">
    <property type="entry name" value="putative glycoside hydrolase family protein from bacillus halodurans"/>
    <property type="match status" value="1"/>
</dbReference>
<dbReference type="InterPro" id="IPR008928">
    <property type="entry name" value="6-hairpin_glycosidase_sf"/>
</dbReference>
<dbReference type="InterPro" id="IPR012341">
    <property type="entry name" value="6hp_glycosidase-like_sf"/>
</dbReference>
<dbReference type="InterPro" id="IPR049053">
    <property type="entry name" value="AFCA-like_C"/>
</dbReference>
<dbReference type="InterPro" id="IPR016518">
    <property type="entry name" value="Alpha-L-fucosidase"/>
</dbReference>
<dbReference type="InterPro" id="IPR054363">
    <property type="entry name" value="GH95_cat"/>
</dbReference>
<dbReference type="InterPro" id="IPR027414">
    <property type="entry name" value="GH95_N_dom"/>
</dbReference>
<dbReference type="PANTHER" id="PTHR31084:SF3">
    <property type="entry name" value="ALPHA-FUCOSIDASE A"/>
    <property type="match status" value="1"/>
</dbReference>
<dbReference type="PANTHER" id="PTHR31084">
    <property type="entry name" value="ALPHA-L-FUCOSIDASE 2"/>
    <property type="match status" value="1"/>
</dbReference>
<dbReference type="Pfam" id="PF14498">
    <property type="entry name" value="Glyco_hyd_65N_2"/>
    <property type="match status" value="1"/>
</dbReference>
<dbReference type="Pfam" id="PF21307">
    <property type="entry name" value="Glyco_hydro_95_C"/>
    <property type="match status" value="1"/>
</dbReference>
<dbReference type="Pfam" id="PF22124">
    <property type="entry name" value="Glyco_hydro_95_cat"/>
    <property type="match status" value="1"/>
</dbReference>
<dbReference type="PIRSF" id="PIRSF007663">
    <property type="entry name" value="UCP007663"/>
    <property type="match status" value="1"/>
</dbReference>
<dbReference type="SUPFAM" id="SSF48208">
    <property type="entry name" value="Six-hairpin glycosidases"/>
    <property type="match status" value="1"/>
</dbReference>
<name>AFCA_ASPOR</name>
<reference key="1">
    <citation type="journal article" date="2005" name="Nature">
        <title>Genome sequencing and analysis of Aspergillus oryzae.</title>
        <authorList>
            <person name="Machida M."/>
            <person name="Asai K."/>
            <person name="Sano M."/>
            <person name="Tanaka T."/>
            <person name="Kumagai T."/>
            <person name="Terai G."/>
            <person name="Kusumoto K."/>
            <person name="Arima T."/>
            <person name="Akita O."/>
            <person name="Kashiwagi Y."/>
            <person name="Abe K."/>
            <person name="Gomi K."/>
            <person name="Horiuchi H."/>
            <person name="Kitamoto K."/>
            <person name="Kobayashi T."/>
            <person name="Takeuchi M."/>
            <person name="Denning D.W."/>
            <person name="Galagan J.E."/>
            <person name="Nierman W.C."/>
            <person name="Yu J."/>
            <person name="Archer D.B."/>
            <person name="Bennett J.W."/>
            <person name="Bhatnagar D."/>
            <person name="Cleveland T.E."/>
            <person name="Fedorova N.D."/>
            <person name="Gotoh O."/>
            <person name="Horikawa H."/>
            <person name="Hosoyama A."/>
            <person name="Ichinomiya M."/>
            <person name="Igarashi R."/>
            <person name="Iwashita K."/>
            <person name="Juvvadi P.R."/>
            <person name="Kato M."/>
            <person name="Kato Y."/>
            <person name="Kin T."/>
            <person name="Kokubun A."/>
            <person name="Maeda H."/>
            <person name="Maeyama N."/>
            <person name="Maruyama J."/>
            <person name="Nagasaki H."/>
            <person name="Nakajima T."/>
            <person name="Oda K."/>
            <person name="Okada K."/>
            <person name="Paulsen I."/>
            <person name="Sakamoto K."/>
            <person name="Sawano T."/>
            <person name="Takahashi M."/>
            <person name="Takase K."/>
            <person name="Terabayashi Y."/>
            <person name="Wortman J.R."/>
            <person name="Yamada O."/>
            <person name="Yamagata Y."/>
            <person name="Anazawa H."/>
            <person name="Hata Y."/>
            <person name="Koide Y."/>
            <person name="Komori T."/>
            <person name="Koyama Y."/>
            <person name="Minetoki T."/>
            <person name="Suharnan S."/>
            <person name="Tanaka A."/>
            <person name="Isono K."/>
            <person name="Kuhara S."/>
            <person name="Ogasawara N."/>
            <person name="Kikuchi H."/>
        </authorList>
    </citation>
    <scope>NUCLEOTIDE SEQUENCE [LARGE SCALE GENOMIC DNA]</scope>
    <source>
        <strain>ATCC 42149 / RIB 40</strain>
    </source>
</reference>
<evidence type="ECO:0000250" key="1"/>
<evidence type="ECO:0000255" key="2"/>
<evidence type="ECO:0000305" key="3"/>
<proteinExistence type="inferred from homology"/>
<gene>
    <name type="primary">afcA</name>
    <name type="ORF">AO090005000382</name>
</gene>
<sequence>MRSLVLLGMSSLATANSLWSSKAASWDTTNEAYTLGNGKLGVMPFGEPGAEKLNLNHDELWEGGPFEVNGYRGGNPNSSMTEILSEVRDEIWKKGTGNDSRLHGDTDGYGSFHSLANLTIAIDGIDKVSDYTRSLDLGTGIHTTTYSTGKGKYTTDVYCSYPAQVCIYKLNSTATLSKVTIYFDQLVEESSLWNATCDSDFARLRGVTQEGPPRGMTYDTIARSSIPGRCDSSTGKLAINARNSSSLTIVIGAGTDFDGTKGTAATDYTFKGEDPAEYVEKITSSALSQSESKLRTEHIEDYSGLMSAFTLDLPDTQDSTGTELSTLITNYNANKTDGDPYLEKLLFDYGRHLFISSSRANSLPPNLQGVWSPTKNAAWSGDYHANINLQMNLWGAEATGLGELTVAVFNYMEQNWMPRGAETAELLYGGAGWVTHDEMNIFGHTGSLVVNPCTSPEQGPTTFGCTHWQQLIHQVYENAIQGAEIAGETDSTLLKDIKDQLPRLDKGLHIGTWGQIKEWKLPDSYDYEKEGNEHRHLSHLVGWYPGWSLSSYFNGYNNATIQSAVNTSLISRGVGLYTNAGWEKVWRSACWARLNNTEKAHYELRLTIDQNIGQSGLSLYSGGDTPSGAFQIDANFGYLGAVLSMLVVDMPLDSTHSEDDVRTVVLGPAIPAAWAGGSVKGLRLRGGGSVDFSWDSEGLVDKASATGVSSNVRIVNVEGTVLV</sequence>